<evidence type="ECO:0000255" key="1">
    <source>
        <dbReference type="HAMAP-Rule" id="MF_01394"/>
    </source>
</evidence>
<keyword id="KW-0997">Cell inner membrane</keyword>
<keyword id="KW-1003">Cell membrane</keyword>
<keyword id="KW-0472">Membrane</keyword>
<keyword id="KW-0520">NAD</keyword>
<keyword id="KW-0874">Quinone</keyword>
<keyword id="KW-1278">Translocase</keyword>
<keyword id="KW-0812">Transmembrane</keyword>
<keyword id="KW-1133">Transmembrane helix</keyword>
<keyword id="KW-0813">Transport</keyword>
<keyword id="KW-0830">Ubiquinone</keyword>
<organism>
    <name type="scientific">Burkholderia pseudomallei (strain 1710b)</name>
    <dbReference type="NCBI Taxonomy" id="320372"/>
    <lineage>
        <taxon>Bacteria</taxon>
        <taxon>Pseudomonadati</taxon>
        <taxon>Pseudomonadota</taxon>
        <taxon>Betaproteobacteria</taxon>
        <taxon>Burkholderiales</taxon>
        <taxon>Burkholderiaceae</taxon>
        <taxon>Burkholderia</taxon>
        <taxon>pseudomallei group</taxon>
    </lineage>
</organism>
<protein>
    <recommendedName>
        <fullName evidence="1">NADH-quinone oxidoreductase subunit A</fullName>
        <ecNumber evidence="1">7.1.1.-</ecNumber>
    </recommendedName>
    <alternativeName>
        <fullName evidence="1">NADH dehydrogenase I subunit A</fullName>
    </alternativeName>
    <alternativeName>
        <fullName evidence="1">NDH-1 subunit A</fullName>
    </alternativeName>
    <alternativeName>
        <fullName evidence="1">NUO1</fullName>
    </alternativeName>
</protein>
<dbReference type="EC" id="7.1.1.-" evidence="1"/>
<dbReference type="EMBL" id="CP000124">
    <property type="protein sequence ID" value="ABA48547.1"/>
    <property type="molecule type" value="Genomic_DNA"/>
</dbReference>
<dbReference type="RefSeq" id="WP_004186624.1">
    <property type="nucleotide sequence ID" value="NC_007434.1"/>
</dbReference>
<dbReference type="SMR" id="Q3JUA9"/>
<dbReference type="EnsemblBacteria" id="ABA48547">
    <property type="protein sequence ID" value="ABA48547"/>
    <property type="gene ID" value="BURPS1710b_1435"/>
</dbReference>
<dbReference type="KEGG" id="bpm:BURPS1710b_1435"/>
<dbReference type="HOGENOM" id="CLU_119549_3_1_4"/>
<dbReference type="Proteomes" id="UP000002700">
    <property type="component" value="Chromosome I"/>
</dbReference>
<dbReference type="GO" id="GO:0030964">
    <property type="term" value="C:NADH dehydrogenase complex"/>
    <property type="evidence" value="ECO:0007669"/>
    <property type="project" value="TreeGrafter"/>
</dbReference>
<dbReference type="GO" id="GO:0005886">
    <property type="term" value="C:plasma membrane"/>
    <property type="evidence" value="ECO:0007669"/>
    <property type="project" value="UniProtKB-SubCell"/>
</dbReference>
<dbReference type="GO" id="GO:0008137">
    <property type="term" value="F:NADH dehydrogenase (ubiquinone) activity"/>
    <property type="evidence" value="ECO:0007669"/>
    <property type="project" value="InterPro"/>
</dbReference>
<dbReference type="GO" id="GO:0050136">
    <property type="term" value="F:NADH:ubiquinone reductase (non-electrogenic) activity"/>
    <property type="evidence" value="ECO:0007669"/>
    <property type="project" value="UniProtKB-UniRule"/>
</dbReference>
<dbReference type="GO" id="GO:0048038">
    <property type="term" value="F:quinone binding"/>
    <property type="evidence" value="ECO:0007669"/>
    <property type="project" value="UniProtKB-KW"/>
</dbReference>
<dbReference type="FunFam" id="1.20.58.1610:FF:000004">
    <property type="entry name" value="NADH-quinone oxidoreductase subunit A"/>
    <property type="match status" value="1"/>
</dbReference>
<dbReference type="Gene3D" id="1.20.58.1610">
    <property type="entry name" value="NADH:ubiquinone/plastoquinone oxidoreductase, chain 3"/>
    <property type="match status" value="1"/>
</dbReference>
<dbReference type="HAMAP" id="MF_01394">
    <property type="entry name" value="NDH1_NuoA"/>
    <property type="match status" value="1"/>
</dbReference>
<dbReference type="InterPro" id="IPR023043">
    <property type="entry name" value="NAD(P)H_OxRDtase_bac/plastid"/>
</dbReference>
<dbReference type="InterPro" id="IPR000440">
    <property type="entry name" value="NADH_UbQ/plastoQ_OxRdtase_su3"/>
</dbReference>
<dbReference type="InterPro" id="IPR038430">
    <property type="entry name" value="NDAH_ubi_oxred_su3_sf"/>
</dbReference>
<dbReference type="PANTHER" id="PTHR11058">
    <property type="entry name" value="NADH-UBIQUINONE OXIDOREDUCTASE CHAIN 3"/>
    <property type="match status" value="1"/>
</dbReference>
<dbReference type="PANTHER" id="PTHR11058:SF9">
    <property type="entry name" value="NADH-UBIQUINONE OXIDOREDUCTASE CHAIN 3"/>
    <property type="match status" value="1"/>
</dbReference>
<dbReference type="Pfam" id="PF00507">
    <property type="entry name" value="Oxidored_q4"/>
    <property type="match status" value="1"/>
</dbReference>
<accession>Q3JUA9</accession>
<gene>
    <name evidence="1" type="primary">nuoA</name>
    <name type="ordered locus">BURPS1710b_1435</name>
</gene>
<reference key="1">
    <citation type="journal article" date="2010" name="Genome Biol. Evol.">
        <title>Continuing evolution of Burkholderia mallei through genome reduction and large-scale rearrangements.</title>
        <authorList>
            <person name="Losada L."/>
            <person name="Ronning C.M."/>
            <person name="DeShazer D."/>
            <person name="Woods D."/>
            <person name="Fedorova N."/>
            <person name="Kim H.S."/>
            <person name="Shabalina S.A."/>
            <person name="Pearson T.R."/>
            <person name="Brinkac L."/>
            <person name="Tan P."/>
            <person name="Nandi T."/>
            <person name="Crabtree J."/>
            <person name="Badger J."/>
            <person name="Beckstrom-Sternberg S."/>
            <person name="Saqib M."/>
            <person name="Schutzer S.E."/>
            <person name="Keim P."/>
            <person name="Nierman W.C."/>
        </authorList>
    </citation>
    <scope>NUCLEOTIDE SEQUENCE [LARGE SCALE GENOMIC DNA]</scope>
    <source>
        <strain>1710b</strain>
    </source>
</reference>
<proteinExistence type="inferred from homology"/>
<name>NUOA_BURP1</name>
<sequence length="119" mass="13513">MNLAAYYPVLLFLLVGTGLGIALVSIGKILGPNKPDSEKNAPYECGFEAFEDARMKFDVRYYLVAILFIIFDLETAFLFPWGVALREIGWPGFIAMMIFLLEFLLGFAYIWKKGGLDWE</sequence>
<comment type="function">
    <text evidence="1">NDH-1 shuttles electrons from NADH, via FMN and iron-sulfur (Fe-S) centers, to quinones in the respiratory chain. The immediate electron acceptor for the enzyme in this species is believed to be ubiquinone. Couples the redox reaction to proton translocation (for every two electrons transferred, four hydrogen ions are translocated across the cytoplasmic membrane), and thus conserves the redox energy in a proton gradient.</text>
</comment>
<comment type="catalytic activity">
    <reaction evidence="1">
        <text>a quinone + NADH + 5 H(+)(in) = a quinol + NAD(+) + 4 H(+)(out)</text>
        <dbReference type="Rhea" id="RHEA:57888"/>
        <dbReference type="ChEBI" id="CHEBI:15378"/>
        <dbReference type="ChEBI" id="CHEBI:24646"/>
        <dbReference type="ChEBI" id="CHEBI:57540"/>
        <dbReference type="ChEBI" id="CHEBI:57945"/>
        <dbReference type="ChEBI" id="CHEBI:132124"/>
    </reaction>
</comment>
<comment type="subunit">
    <text evidence="1">NDH-1 is composed of 14 different subunits. Subunits NuoA, H, J, K, L, M, N constitute the membrane sector of the complex.</text>
</comment>
<comment type="subcellular location">
    <subcellularLocation>
        <location evidence="1">Cell inner membrane</location>
        <topology evidence="1">Multi-pass membrane protein</topology>
    </subcellularLocation>
</comment>
<comment type="similarity">
    <text evidence="1">Belongs to the complex I subunit 3 family.</text>
</comment>
<feature type="chain" id="PRO_0000362647" description="NADH-quinone oxidoreductase subunit A">
    <location>
        <begin position="1"/>
        <end position="119"/>
    </location>
</feature>
<feature type="transmembrane region" description="Helical" evidence="1">
    <location>
        <begin position="7"/>
        <end position="27"/>
    </location>
</feature>
<feature type="transmembrane region" description="Helical" evidence="1">
    <location>
        <begin position="63"/>
        <end position="83"/>
    </location>
</feature>
<feature type="transmembrane region" description="Helical" evidence="1">
    <location>
        <begin position="88"/>
        <end position="108"/>
    </location>
</feature>